<keyword id="KW-1003">Cell membrane</keyword>
<keyword id="KW-0961">Cell wall biogenesis/degradation</keyword>
<keyword id="KW-0325">Glycoprotein</keyword>
<keyword id="KW-0472">Membrane</keyword>
<keyword id="KW-1185">Reference proteome</keyword>
<keyword id="KW-0812">Transmembrane</keyword>
<keyword id="KW-1133">Transmembrane helix</keyword>
<sequence>MKTDAIELGVAKDSTPIGGANRGVSILDFILRLVALVGTLASAILMGTTNETLPFATQFIRFRAEYDDLPTFTFFVVANIVVSGYLLLSLPLSIVNIVRSTAKNRRIILIIFDTAMLALLTAGASAAAAIVYLAHKGNTRANWFAICQQFNSFCERISGSLIGSFVGVAVFILLILMSASALSRRN</sequence>
<feature type="chain" id="PRO_0000376095" description="Casparian strip membrane protein 5">
    <location>
        <begin position="1"/>
        <end position="186"/>
    </location>
</feature>
<feature type="topological domain" description="Cytoplasmic" evidence="2">
    <location>
        <begin position="1"/>
        <end position="25"/>
    </location>
</feature>
<feature type="transmembrane region" description="Helical" evidence="2">
    <location>
        <begin position="26"/>
        <end position="46"/>
    </location>
</feature>
<feature type="topological domain" description="Extracellular" evidence="2">
    <location>
        <begin position="47"/>
        <end position="73"/>
    </location>
</feature>
<feature type="transmembrane region" description="Helical" evidence="2">
    <location>
        <begin position="74"/>
        <end position="94"/>
    </location>
</feature>
<feature type="topological domain" description="Cytoplasmic" evidence="2">
    <location>
        <begin position="95"/>
        <end position="106"/>
    </location>
</feature>
<feature type="transmembrane region" description="Helical" evidence="2">
    <location>
        <begin position="107"/>
        <end position="127"/>
    </location>
</feature>
<feature type="topological domain" description="Extracellular" evidence="2">
    <location>
        <begin position="128"/>
        <end position="156"/>
    </location>
</feature>
<feature type="transmembrane region" description="Helical" evidence="2">
    <location>
        <begin position="157"/>
        <end position="177"/>
    </location>
</feature>
<feature type="topological domain" description="Cytoplasmic" evidence="2">
    <location>
        <begin position="178"/>
        <end position="186"/>
    </location>
</feature>
<feature type="glycosylation site" description="N-linked (GlcNAc...) asparagine" evidence="2">
    <location>
        <position position="50"/>
    </location>
</feature>
<protein>
    <recommendedName>
        <fullName>Casparian strip membrane protein 5</fullName>
        <shortName>RcCASP5</shortName>
    </recommendedName>
</protein>
<proteinExistence type="inferred from homology"/>
<accession>B9T4E6</accession>
<evidence type="ECO:0000250" key="1"/>
<evidence type="ECO:0000255" key="2"/>
<evidence type="ECO:0000305" key="3"/>
<name>CASP5_RICCO</name>
<organism>
    <name type="scientific">Ricinus communis</name>
    <name type="common">Castor bean</name>
    <dbReference type="NCBI Taxonomy" id="3988"/>
    <lineage>
        <taxon>Eukaryota</taxon>
        <taxon>Viridiplantae</taxon>
        <taxon>Streptophyta</taxon>
        <taxon>Embryophyta</taxon>
        <taxon>Tracheophyta</taxon>
        <taxon>Spermatophyta</taxon>
        <taxon>Magnoliopsida</taxon>
        <taxon>eudicotyledons</taxon>
        <taxon>Gunneridae</taxon>
        <taxon>Pentapetalae</taxon>
        <taxon>rosids</taxon>
        <taxon>fabids</taxon>
        <taxon>Malpighiales</taxon>
        <taxon>Euphorbiaceae</taxon>
        <taxon>Acalyphoideae</taxon>
        <taxon>Acalypheae</taxon>
        <taxon>Ricinus</taxon>
    </lineage>
</organism>
<reference key="1">
    <citation type="journal article" date="2010" name="Nat. Biotechnol.">
        <title>Draft genome sequence of the oilseed species Ricinus communis.</title>
        <authorList>
            <person name="Chan A.P."/>
            <person name="Crabtree J."/>
            <person name="Zhao Q."/>
            <person name="Lorenzi H."/>
            <person name="Orvis J."/>
            <person name="Puiu D."/>
            <person name="Melake-Berhan A."/>
            <person name="Jones K.M."/>
            <person name="Redman J."/>
            <person name="Chen G."/>
            <person name="Cahoon E.B."/>
            <person name="Gedil M."/>
            <person name="Stanke M."/>
            <person name="Haas B.J."/>
            <person name="Wortman J.R."/>
            <person name="Fraser-Liggett C.M."/>
            <person name="Ravel J."/>
            <person name="Rabinowicz P.D."/>
        </authorList>
    </citation>
    <scope>NUCLEOTIDE SEQUENCE [LARGE SCALE GENOMIC DNA]</scope>
    <source>
        <strain>cv. Hale</strain>
    </source>
</reference>
<reference key="2">
    <citation type="journal article" date="2014" name="Plant Physiol.">
        <title>Functional and evolutionary analysis of the CASPARIAN STRIP MEMBRANE DOMAIN PROTEIN family.</title>
        <authorList>
            <person name="Roppolo D."/>
            <person name="Boeckmann B."/>
            <person name="Pfister A."/>
            <person name="Boutet E."/>
            <person name="Rubio M.C."/>
            <person name="Denervaud-Tendon V."/>
            <person name="Vermeer J.E."/>
            <person name="Gheyselinck J."/>
            <person name="Xenarios I."/>
            <person name="Geldner N."/>
        </authorList>
    </citation>
    <scope>GENE FAMILY</scope>
    <scope>NOMENCLATURE</scope>
</reference>
<comment type="function">
    <text evidence="1">Regulates membrane-cell wall junctions and localized cell wall deposition. Required for establishment of the Casparian strip membrane domain (CSD) and the subsequent formation of Casparian strips, a cell wall modification of the root endodermis that determines an apoplastic barrier between the intraorganismal apoplasm and the extraorganismal apoplasm and prevents lateral diffusion (By similarity).</text>
</comment>
<comment type="subunit">
    <text evidence="1">Homodimer and heterodimers.</text>
</comment>
<comment type="subcellular location">
    <subcellularLocation>
        <location evidence="1">Cell membrane</location>
        <topology evidence="1">Multi-pass membrane protein</topology>
    </subcellularLocation>
    <text evidence="1">Very restricted localization following a belt shape within the plasma membrane which coincides with the position of the Casparian strip membrane domain in the root endodermis.</text>
</comment>
<comment type="similarity">
    <text evidence="3">Belongs to the Casparian strip membrane proteins (CASP) family.</text>
</comment>
<gene>
    <name type="ORF">RCOM_0299440</name>
</gene>
<dbReference type="EMBL" id="EQ974468">
    <property type="protein sequence ID" value="EEF29260.1"/>
    <property type="molecule type" value="Genomic_DNA"/>
</dbReference>
<dbReference type="SMR" id="B9T4E6"/>
<dbReference type="FunCoup" id="B9T4E6">
    <property type="interactions" value="3"/>
</dbReference>
<dbReference type="STRING" id="3988.B9T4E6"/>
<dbReference type="eggNOG" id="ENOG502RXTK">
    <property type="taxonomic scope" value="Eukaryota"/>
</dbReference>
<dbReference type="InParanoid" id="B9T4E6"/>
<dbReference type="OMA" id="ANWLSIC"/>
<dbReference type="OrthoDB" id="753675at2759"/>
<dbReference type="Proteomes" id="UP000008311">
    <property type="component" value="Unassembled WGS sequence"/>
</dbReference>
<dbReference type="GO" id="GO:0005886">
    <property type="term" value="C:plasma membrane"/>
    <property type="evidence" value="ECO:0000318"/>
    <property type="project" value="GO_Central"/>
</dbReference>
<dbReference type="GO" id="GO:0042545">
    <property type="term" value="P:cell wall modification"/>
    <property type="evidence" value="ECO:0000318"/>
    <property type="project" value="GO_Central"/>
</dbReference>
<dbReference type="GO" id="GO:0007043">
    <property type="term" value="P:cell-cell junction assembly"/>
    <property type="evidence" value="ECO:0000318"/>
    <property type="project" value="GO_Central"/>
</dbReference>
<dbReference type="InterPro" id="IPR006459">
    <property type="entry name" value="CASP/CASPL"/>
</dbReference>
<dbReference type="InterPro" id="IPR006702">
    <property type="entry name" value="CASP_dom"/>
</dbReference>
<dbReference type="InterPro" id="IPR044173">
    <property type="entry name" value="CASPL"/>
</dbReference>
<dbReference type="NCBIfam" id="TIGR01569">
    <property type="entry name" value="A_tha_TIGR01569"/>
    <property type="match status" value="1"/>
</dbReference>
<dbReference type="PANTHER" id="PTHR36488:SF12">
    <property type="entry name" value="CASP-LIKE PROTEIN"/>
    <property type="match status" value="1"/>
</dbReference>
<dbReference type="PANTHER" id="PTHR36488">
    <property type="entry name" value="CASP-LIKE PROTEIN 1U1"/>
    <property type="match status" value="1"/>
</dbReference>
<dbReference type="Pfam" id="PF04535">
    <property type="entry name" value="CASP_dom"/>
    <property type="match status" value="1"/>
</dbReference>